<evidence type="ECO:0000255" key="1">
    <source>
        <dbReference type="HAMAP-Rule" id="MF_00061"/>
    </source>
</evidence>
<comment type="function">
    <text evidence="1">Catalyzes the phosphorylation of the position 2 hydroxy group of 4-diphosphocytidyl-2C-methyl-D-erythritol.</text>
</comment>
<comment type="catalytic activity">
    <reaction evidence="1">
        <text>4-CDP-2-C-methyl-D-erythritol + ATP = 4-CDP-2-C-methyl-D-erythritol 2-phosphate + ADP + H(+)</text>
        <dbReference type="Rhea" id="RHEA:18437"/>
        <dbReference type="ChEBI" id="CHEBI:15378"/>
        <dbReference type="ChEBI" id="CHEBI:30616"/>
        <dbReference type="ChEBI" id="CHEBI:57823"/>
        <dbReference type="ChEBI" id="CHEBI:57919"/>
        <dbReference type="ChEBI" id="CHEBI:456216"/>
        <dbReference type="EC" id="2.7.1.148"/>
    </reaction>
</comment>
<comment type="pathway">
    <text evidence="1">Isoprenoid biosynthesis; isopentenyl diphosphate biosynthesis via DXP pathway; isopentenyl diphosphate from 1-deoxy-D-xylulose 5-phosphate: step 3/6.</text>
</comment>
<comment type="subunit">
    <text evidence="1">Homodimer.</text>
</comment>
<comment type="similarity">
    <text evidence="1">Belongs to the GHMP kinase family. IspE subfamily.</text>
</comment>
<organism>
    <name type="scientific">Shigella dysenteriae serotype 1 (strain Sd197)</name>
    <dbReference type="NCBI Taxonomy" id="300267"/>
    <lineage>
        <taxon>Bacteria</taxon>
        <taxon>Pseudomonadati</taxon>
        <taxon>Pseudomonadota</taxon>
        <taxon>Gammaproteobacteria</taxon>
        <taxon>Enterobacterales</taxon>
        <taxon>Enterobacteriaceae</taxon>
        <taxon>Shigella</taxon>
    </lineage>
</organism>
<feature type="chain" id="PRO_0000235130" description="4-diphosphocytidyl-2-C-methyl-D-erythritol kinase">
    <location>
        <begin position="1"/>
        <end position="283"/>
    </location>
</feature>
<feature type="active site" evidence="1">
    <location>
        <position position="10"/>
    </location>
</feature>
<feature type="active site" evidence="1">
    <location>
        <position position="141"/>
    </location>
</feature>
<feature type="binding site" evidence="1">
    <location>
        <begin position="99"/>
        <end position="109"/>
    </location>
    <ligand>
        <name>ATP</name>
        <dbReference type="ChEBI" id="CHEBI:30616"/>
    </ligand>
</feature>
<reference key="1">
    <citation type="journal article" date="2005" name="Nucleic Acids Res.">
        <title>Genome dynamics and diversity of Shigella species, the etiologic agents of bacillary dysentery.</title>
        <authorList>
            <person name="Yang F."/>
            <person name="Yang J."/>
            <person name="Zhang X."/>
            <person name="Chen L."/>
            <person name="Jiang Y."/>
            <person name="Yan Y."/>
            <person name="Tang X."/>
            <person name="Wang J."/>
            <person name="Xiong Z."/>
            <person name="Dong J."/>
            <person name="Xue Y."/>
            <person name="Zhu Y."/>
            <person name="Xu X."/>
            <person name="Sun L."/>
            <person name="Chen S."/>
            <person name="Nie H."/>
            <person name="Peng J."/>
            <person name="Xu J."/>
            <person name="Wang Y."/>
            <person name="Yuan Z."/>
            <person name="Wen Y."/>
            <person name="Yao Z."/>
            <person name="Shen Y."/>
            <person name="Qiang B."/>
            <person name="Hou Y."/>
            <person name="Yu J."/>
            <person name="Jin Q."/>
        </authorList>
    </citation>
    <scope>NUCLEOTIDE SEQUENCE [LARGE SCALE GENOMIC DNA]</scope>
    <source>
        <strain>Sd197</strain>
    </source>
</reference>
<accession>Q32GZ9</accession>
<sequence length="283" mass="30952">MRTQWPSPAKLNLFLYITGQRADGYHTLQTLFQFLDYGDTISIELRDNGDIRLLTPVEGVEHEDNLIVRAARLLMKTAADSGRLPTGSGANISIDKRLPMGGGLGGGSSNAATVLVALNHLWQCGLSMDELAEMGLTLGADVPVFVRGHAAFAEGVGEILTPVDPPEKWYLVAHPGVSIPTPVIFKDPELPRNTPKRSIETLLKCEFSNDCEVIARKRFREVDAVLSWLLEYAPSRLTGTGACVFAEFDTESEARQVLEQAPEWLNGFVAKGVNLSPLHRAML</sequence>
<keyword id="KW-0067">ATP-binding</keyword>
<keyword id="KW-0414">Isoprene biosynthesis</keyword>
<keyword id="KW-0418">Kinase</keyword>
<keyword id="KW-0547">Nucleotide-binding</keyword>
<keyword id="KW-1185">Reference proteome</keyword>
<keyword id="KW-0808">Transferase</keyword>
<gene>
    <name evidence="1" type="primary">ispE</name>
    <name type="ordered locus">SDY_1257</name>
</gene>
<name>ISPE_SHIDS</name>
<protein>
    <recommendedName>
        <fullName evidence="1">4-diphosphocytidyl-2-C-methyl-D-erythritol kinase</fullName>
        <shortName evidence="1">CMK</shortName>
        <ecNumber evidence="1">2.7.1.148</ecNumber>
    </recommendedName>
    <alternativeName>
        <fullName evidence="1">4-(cytidine-5'-diphospho)-2-C-methyl-D-erythritol kinase</fullName>
    </alternativeName>
</protein>
<dbReference type="EC" id="2.7.1.148" evidence="1"/>
<dbReference type="EMBL" id="CP000034">
    <property type="protein sequence ID" value="ABB61406.1"/>
    <property type="molecule type" value="Genomic_DNA"/>
</dbReference>
<dbReference type="RefSeq" id="WP_001260351.1">
    <property type="nucleotide sequence ID" value="NC_007606.1"/>
</dbReference>
<dbReference type="RefSeq" id="YP_402897.1">
    <property type="nucleotide sequence ID" value="NC_007606.1"/>
</dbReference>
<dbReference type="SMR" id="Q32GZ9"/>
<dbReference type="STRING" id="300267.SDY_1257"/>
<dbReference type="EnsemblBacteria" id="ABB61406">
    <property type="protein sequence ID" value="ABB61406"/>
    <property type="gene ID" value="SDY_1257"/>
</dbReference>
<dbReference type="KEGG" id="sdy:SDY_1257"/>
<dbReference type="PATRIC" id="fig|300267.13.peg.1494"/>
<dbReference type="HOGENOM" id="CLU_053057_3_0_6"/>
<dbReference type="UniPathway" id="UPA00056">
    <property type="reaction ID" value="UER00094"/>
</dbReference>
<dbReference type="Proteomes" id="UP000002716">
    <property type="component" value="Chromosome"/>
</dbReference>
<dbReference type="GO" id="GO:0050515">
    <property type="term" value="F:4-(cytidine 5'-diphospho)-2-C-methyl-D-erythritol kinase activity"/>
    <property type="evidence" value="ECO:0007669"/>
    <property type="project" value="UniProtKB-UniRule"/>
</dbReference>
<dbReference type="GO" id="GO:0005524">
    <property type="term" value="F:ATP binding"/>
    <property type="evidence" value="ECO:0007669"/>
    <property type="project" value="UniProtKB-UniRule"/>
</dbReference>
<dbReference type="GO" id="GO:0019288">
    <property type="term" value="P:isopentenyl diphosphate biosynthetic process, methylerythritol 4-phosphate pathway"/>
    <property type="evidence" value="ECO:0007669"/>
    <property type="project" value="UniProtKB-UniRule"/>
</dbReference>
<dbReference type="GO" id="GO:0016114">
    <property type="term" value="P:terpenoid biosynthetic process"/>
    <property type="evidence" value="ECO:0007669"/>
    <property type="project" value="InterPro"/>
</dbReference>
<dbReference type="FunFam" id="3.30.230.10:FF:000022">
    <property type="entry name" value="4-diphosphocytidyl-2-C-methyl-D-erythritol kinase"/>
    <property type="match status" value="1"/>
</dbReference>
<dbReference type="FunFam" id="3.30.70.890:FF:000004">
    <property type="entry name" value="4-diphosphocytidyl-2-C-methyl-D-erythritol kinase"/>
    <property type="match status" value="1"/>
</dbReference>
<dbReference type="Gene3D" id="3.30.230.10">
    <property type="match status" value="1"/>
</dbReference>
<dbReference type="Gene3D" id="3.30.70.890">
    <property type="entry name" value="GHMP kinase, C-terminal domain"/>
    <property type="match status" value="1"/>
</dbReference>
<dbReference type="HAMAP" id="MF_00061">
    <property type="entry name" value="IspE"/>
    <property type="match status" value="1"/>
</dbReference>
<dbReference type="InterPro" id="IPR013750">
    <property type="entry name" value="GHMP_kinase_C_dom"/>
</dbReference>
<dbReference type="InterPro" id="IPR036554">
    <property type="entry name" value="GHMP_kinase_C_sf"/>
</dbReference>
<dbReference type="InterPro" id="IPR006204">
    <property type="entry name" value="GHMP_kinase_N_dom"/>
</dbReference>
<dbReference type="InterPro" id="IPR004424">
    <property type="entry name" value="IspE"/>
</dbReference>
<dbReference type="InterPro" id="IPR020568">
    <property type="entry name" value="Ribosomal_Su5_D2-typ_SF"/>
</dbReference>
<dbReference type="InterPro" id="IPR014721">
    <property type="entry name" value="Ribsml_uS5_D2-typ_fold_subgr"/>
</dbReference>
<dbReference type="NCBIfam" id="TIGR00154">
    <property type="entry name" value="ispE"/>
    <property type="match status" value="1"/>
</dbReference>
<dbReference type="PANTHER" id="PTHR43527">
    <property type="entry name" value="4-DIPHOSPHOCYTIDYL-2-C-METHYL-D-ERYTHRITOL KINASE, CHLOROPLASTIC"/>
    <property type="match status" value="1"/>
</dbReference>
<dbReference type="PANTHER" id="PTHR43527:SF2">
    <property type="entry name" value="4-DIPHOSPHOCYTIDYL-2-C-METHYL-D-ERYTHRITOL KINASE, CHLOROPLASTIC"/>
    <property type="match status" value="1"/>
</dbReference>
<dbReference type="Pfam" id="PF08544">
    <property type="entry name" value="GHMP_kinases_C"/>
    <property type="match status" value="1"/>
</dbReference>
<dbReference type="Pfam" id="PF00288">
    <property type="entry name" value="GHMP_kinases_N"/>
    <property type="match status" value="1"/>
</dbReference>
<dbReference type="PIRSF" id="PIRSF010376">
    <property type="entry name" value="IspE"/>
    <property type="match status" value="1"/>
</dbReference>
<dbReference type="SUPFAM" id="SSF55060">
    <property type="entry name" value="GHMP Kinase, C-terminal domain"/>
    <property type="match status" value="1"/>
</dbReference>
<dbReference type="SUPFAM" id="SSF54211">
    <property type="entry name" value="Ribosomal protein S5 domain 2-like"/>
    <property type="match status" value="1"/>
</dbReference>
<proteinExistence type="inferred from homology"/>